<dbReference type="EC" id="7.-.-.-"/>
<dbReference type="EMBL" id="BA000016">
    <property type="protein sequence ID" value="BAB79901.1"/>
    <property type="molecule type" value="Genomic_DNA"/>
</dbReference>
<dbReference type="RefSeq" id="WP_003462793.1">
    <property type="nucleotide sequence ID" value="NC_003366.1"/>
</dbReference>
<dbReference type="SMR" id="Q8XNY7"/>
<dbReference type="STRING" id="195102.gene:10489439"/>
<dbReference type="KEGG" id="cpe:CPE0195"/>
<dbReference type="HOGENOM" id="CLU_000604_1_22_9"/>
<dbReference type="Proteomes" id="UP000000818">
    <property type="component" value="Chromosome"/>
</dbReference>
<dbReference type="GO" id="GO:0043190">
    <property type="term" value="C:ATP-binding cassette (ABC) transporter complex"/>
    <property type="evidence" value="ECO:0007669"/>
    <property type="project" value="TreeGrafter"/>
</dbReference>
<dbReference type="GO" id="GO:0005524">
    <property type="term" value="F:ATP binding"/>
    <property type="evidence" value="ECO:0007669"/>
    <property type="project" value="UniProtKB-KW"/>
</dbReference>
<dbReference type="GO" id="GO:0016887">
    <property type="term" value="F:ATP hydrolysis activity"/>
    <property type="evidence" value="ECO:0007669"/>
    <property type="project" value="InterPro"/>
</dbReference>
<dbReference type="GO" id="GO:0042626">
    <property type="term" value="F:ATPase-coupled transmembrane transporter activity"/>
    <property type="evidence" value="ECO:0007669"/>
    <property type="project" value="TreeGrafter"/>
</dbReference>
<dbReference type="GO" id="GO:0006824">
    <property type="term" value="P:cobalt ion transport"/>
    <property type="evidence" value="ECO:0007669"/>
    <property type="project" value="InterPro"/>
</dbReference>
<dbReference type="CDD" id="cd03225">
    <property type="entry name" value="ABC_cobalt_CbiO_domain1"/>
    <property type="match status" value="1"/>
</dbReference>
<dbReference type="FunFam" id="3.40.50.300:FF:000224">
    <property type="entry name" value="Energy-coupling factor transporter ATP-binding protein EcfA"/>
    <property type="match status" value="1"/>
</dbReference>
<dbReference type="Gene3D" id="3.40.50.300">
    <property type="entry name" value="P-loop containing nucleotide triphosphate hydrolases"/>
    <property type="match status" value="1"/>
</dbReference>
<dbReference type="InterPro" id="IPR003593">
    <property type="entry name" value="AAA+_ATPase"/>
</dbReference>
<dbReference type="InterPro" id="IPR003439">
    <property type="entry name" value="ABC_transporter-like_ATP-bd"/>
</dbReference>
<dbReference type="InterPro" id="IPR017871">
    <property type="entry name" value="ABC_transporter-like_CS"/>
</dbReference>
<dbReference type="InterPro" id="IPR015856">
    <property type="entry name" value="ABC_transpr_CbiO/EcfA_su"/>
</dbReference>
<dbReference type="InterPro" id="IPR005876">
    <property type="entry name" value="Co_trans_ATP-bd"/>
</dbReference>
<dbReference type="InterPro" id="IPR050095">
    <property type="entry name" value="ECF_ABC_transporter_ATP-bd"/>
</dbReference>
<dbReference type="InterPro" id="IPR027417">
    <property type="entry name" value="P-loop_NTPase"/>
</dbReference>
<dbReference type="NCBIfam" id="TIGR01166">
    <property type="entry name" value="cbiO"/>
    <property type="match status" value="1"/>
</dbReference>
<dbReference type="NCBIfam" id="NF010157">
    <property type="entry name" value="PRK13636.1"/>
    <property type="match status" value="1"/>
</dbReference>
<dbReference type="PANTHER" id="PTHR43553:SF24">
    <property type="entry name" value="ENERGY-COUPLING FACTOR TRANSPORTER ATP-BINDING PROTEIN ECFA1"/>
    <property type="match status" value="1"/>
</dbReference>
<dbReference type="PANTHER" id="PTHR43553">
    <property type="entry name" value="HEAVY METAL TRANSPORTER"/>
    <property type="match status" value="1"/>
</dbReference>
<dbReference type="Pfam" id="PF00005">
    <property type="entry name" value="ABC_tran"/>
    <property type="match status" value="1"/>
</dbReference>
<dbReference type="SMART" id="SM00382">
    <property type="entry name" value="AAA"/>
    <property type="match status" value="1"/>
</dbReference>
<dbReference type="SUPFAM" id="SSF52540">
    <property type="entry name" value="P-loop containing nucleoside triphosphate hydrolases"/>
    <property type="match status" value="1"/>
</dbReference>
<dbReference type="PROSITE" id="PS00211">
    <property type="entry name" value="ABC_TRANSPORTER_1"/>
    <property type="match status" value="1"/>
</dbReference>
<dbReference type="PROSITE" id="PS50893">
    <property type="entry name" value="ABC_TRANSPORTER_2"/>
    <property type="match status" value="1"/>
</dbReference>
<proteinExistence type="inferred from homology"/>
<sequence>MEDYILKVEELNYNYSDGTHALKGINMNIKRGEVTAILGGNGVGKSTLFQNFNGILKPSSGRILFDNKPIDYSRKGIMKLRESIGIVFQDPDNQLFSASVYQDVSFGAVNMKLSEDEIRKRVDNALKRTSIEHLKNKPTHCLSFGQKKRVAIAGVLVMEPKVLILDEPTAGLDPMGVSEIMKLLVEMQKELGITIIIATHDIDIVPLYCDNVFVMKEGRVILQGNPKEVFAEKEVIRKVNLRLPRIGHLMEILKEKDGFVFDELDLTIGQARKTINSWKNKIFND</sequence>
<name>Y195_CLOPE</name>
<organism>
    <name type="scientific">Clostridium perfringens (strain 13 / Type A)</name>
    <dbReference type="NCBI Taxonomy" id="195102"/>
    <lineage>
        <taxon>Bacteria</taxon>
        <taxon>Bacillati</taxon>
        <taxon>Bacillota</taxon>
        <taxon>Clostridia</taxon>
        <taxon>Eubacteriales</taxon>
        <taxon>Clostridiaceae</taxon>
        <taxon>Clostridium</taxon>
    </lineage>
</organism>
<reference key="1">
    <citation type="journal article" date="2002" name="Proc. Natl. Acad. Sci. U.S.A.">
        <title>Complete genome sequence of Clostridium perfringens, an anaerobic flesh-eater.</title>
        <authorList>
            <person name="Shimizu T."/>
            <person name="Ohtani K."/>
            <person name="Hirakawa H."/>
            <person name="Ohshima K."/>
            <person name="Yamashita A."/>
            <person name="Shiba T."/>
            <person name="Ogasawara N."/>
            <person name="Hattori M."/>
            <person name="Kuhara S."/>
            <person name="Hayashi H."/>
        </authorList>
    </citation>
    <scope>NUCLEOTIDE SEQUENCE [LARGE SCALE GENOMIC DNA]</scope>
    <source>
        <strain>13 / Type A</strain>
    </source>
</reference>
<keyword id="KW-0067">ATP-binding</keyword>
<keyword id="KW-1003">Cell membrane</keyword>
<keyword id="KW-0472">Membrane</keyword>
<keyword id="KW-0547">Nucleotide-binding</keyword>
<keyword id="KW-1185">Reference proteome</keyword>
<keyword id="KW-1278">Translocase</keyword>
<keyword id="KW-0813">Transport</keyword>
<feature type="chain" id="PRO_0000092000" description="Putative ABC transporter ATP-binding protein CPE0195">
    <location>
        <begin position="1"/>
        <end position="285"/>
    </location>
</feature>
<feature type="domain" description="ABC transporter" evidence="2">
    <location>
        <begin position="6"/>
        <end position="242"/>
    </location>
</feature>
<feature type="binding site" evidence="2">
    <location>
        <begin position="39"/>
        <end position="46"/>
    </location>
    <ligand>
        <name>ATP</name>
        <dbReference type="ChEBI" id="CHEBI:30616"/>
    </ligand>
</feature>
<gene>
    <name type="ordered locus">CPE0195</name>
</gene>
<protein>
    <recommendedName>
        <fullName>Putative ABC transporter ATP-binding protein CPE0195</fullName>
        <ecNumber>7.-.-.-</ecNumber>
    </recommendedName>
</protein>
<evidence type="ECO:0000250" key="1"/>
<evidence type="ECO:0000255" key="2">
    <source>
        <dbReference type="PROSITE-ProRule" id="PRU00434"/>
    </source>
</evidence>
<evidence type="ECO:0000305" key="3"/>
<comment type="function">
    <text evidence="1">Probably part of an ABC transporter complex. Responsible for energy coupling to the transport system (By similarity).</text>
</comment>
<comment type="subcellular location">
    <subcellularLocation>
        <location evidence="1">Cell membrane</location>
        <topology evidence="1">Peripheral membrane protein</topology>
    </subcellularLocation>
</comment>
<comment type="similarity">
    <text evidence="3">Belongs to the ABC transporter superfamily.</text>
</comment>
<accession>Q8XNY7</accession>